<organism>
    <name type="scientific">Yersinia pseudotuberculosis serotype IB (strain PB1/+)</name>
    <dbReference type="NCBI Taxonomy" id="502801"/>
    <lineage>
        <taxon>Bacteria</taxon>
        <taxon>Pseudomonadati</taxon>
        <taxon>Pseudomonadota</taxon>
        <taxon>Gammaproteobacteria</taxon>
        <taxon>Enterobacterales</taxon>
        <taxon>Yersiniaceae</taxon>
        <taxon>Yersinia</taxon>
    </lineage>
</organism>
<feature type="chain" id="PRO_1000095519" description="Glutamine--tRNA ligase">
    <location>
        <begin position="1"/>
        <end position="555"/>
    </location>
</feature>
<feature type="short sequence motif" description="'HIGH' region" evidence="1">
    <location>
        <begin position="34"/>
        <end position="44"/>
    </location>
</feature>
<feature type="short sequence motif" description="'KMSKS' region" evidence="1">
    <location>
        <begin position="268"/>
        <end position="272"/>
    </location>
</feature>
<feature type="binding site" evidence="1">
    <location>
        <begin position="35"/>
        <end position="37"/>
    </location>
    <ligand>
        <name>ATP</name>
        <dbReference type="ChEBI" id="CHEBI:30616"/>
    </ligand>
</feature>
<feature type="binding site" evidence="1">
    <location>
        <begin position="41"/>
        <end position="47"/>
    </location>
    <ligand>
        <name>ATP</name>
        <dbReference type="ChEBI" id="CHEBI:30616"/>
    </ligand>
</feature>
<feature type="binding site" evidence="1">
    <location>
        <position position="67"/>
    </location>
    <ligand>
        <name>L-glutamine</name>
        <dbReference type="ChEBI" id="CHEBI:58359"/>
    </ligand>
</feature>
<feature type="binding site" evidence="1">
    <location>
        <position position="212"/>
    </location>
    <ligand>
        <name>L-glutamine</name>
        <dbReference type="ChEBI" id="CHEBI:58359"/>
    </ligand>
</feature>
<feature type="binding site" evidence="1">
    <location>
        <position position="231"/>
    </location>
    <ligand>
        <name>ATP</name>
        <dbReference type="ChEBI" id="CHEBI:30616"/>
    </ligand>
</feature>
<feature type="binding site" evidence="1">
    <location>
        <begin position="261"/>
        <end position="262"/>
    </location>
    <ligand>
        <name>ATP</name>
        <dbReference type="ChEBI" id="CHEBI:30616"/>
    </ligand>
</feature>
<feature type="binding site" evidence="1">
    <location>
        <begin position="269"/>
        <end position="271"/>
    </location>
    <ligand>
        <name>ATP</name>
        <dbReference type="ChEBI" id="CHEBI:30616"/>
    </ligand>
</feature>
<name>SYQ_YERPB</name>
<keyword id="KW-0030">Aminoacyl-tRNA synthetase</keyword>
<keyword id="KW-0067">ATP-binding</keyword>
<keyword id="KW-0963">Cytoplasm</keyword>
<keyword id="KW-0436">Ligase</keyword>
<keyword id="KW-0547">Nucleotide-binding</keyword>
<keyword id="KW-0648">Protein biosynthesis</keyword>
<reference key="1">
    <citation type="submission" date="2008-04" db="EMBL/GenBank/DDBJ databases">
        <title>Complete sequence of Yersinia pseudotuberculosis PB1/+.</title>
        <authorList>
            <person name="Copeland A."/>
            <person name="Lucas S."/>
            <person name="Lapidus A."/>
            <person name="Glavina del Rio T."/>
            <person name="Dalin E."/>
            <person name="Tice H."/>
            <person name="Bruce D."/>
            <person name="Goodwin L."/>
            <person name="Pitluck S."/>
            <person name="Munk A.C."/>
            <person name="Brettin T."/>
            <person name="Detter J.C."/>
            <person name="Han C."/>
            <person name="Tapia R."/>
            <person name="Schmutz J."/>
            <person name="Larimer F."/>
            <person name="Land M."/>
            <person name="Hauser L."/>
            <person name="Challacombe J.F."/>
            <person name="Green L."/>
            <person name="Lindler L.E."/>
            <person name="Nikolich M.P."/>
            <person name="Richardson P."/>
        </authorList>
    </citation>
    <scope>NUCLEOTIDE SEQUENCE [LARGE SCALE GENOMIC DNA]</scope>
    <source>
        <strain>PB1/+</strain>
    </source>
</reference>
<comment type="catalytic activity">
    <reaction evidence="1">
        <text>tRNA(Gln) + L-glutamine + ATP = L-glutaminyl-tRNA(Gln) + AMP + diphosphate</text>
        <dbReference type="Rhea" id="RHEA:20121"/>
        <dbReference type="Rhea" id="RHEA-COMP:9662"/>
        <dbReference type="Rhea" id="RHEA-COMP:9681"/>
        <dbReference type="ChEBI" id="CHEBI:30616"/>
        <dbReference type="ChEBI" id="CHEBI:33019"/>
        <dbReference type="ChEBI" id="CHEBI:58359"/>
        <dbReference type="ChEBI" id="CHEBI:78442"/>
        <dbReference type="ChEBI" id="CHEBI:78521"/>
        <dbReference type="ChEBI" id="CHEBI:456215"/>
        <dbReference type="EC" id="6.1.1.18"/>
    </reaction>
</comment>
<comment type="subunit">
    <text evidence="1">Monomer.</text>
</comment>
<comment type="subcellular location">
    <subcellularLocation>
        <location evidence="1">Cytoplasm</location>
    </subcellularLocation>
</comment>
<comment type="similarity">
    <text evidence="1">Belongs to the class-I aminoacyl-tRNA synthetase family.</text>
</comment>
<dbReference type="EC" id="6.1.1.18" evidence="1"/>
<dbReference type="EMBL" id="CP001048">
    <property type="protein sequence ID" value="ACC88154.1"/>
    <property type="molecule type" value="Genomic_DNA"/>
</dbReference>
<dbReference type="RefSeq" id="WP_002210354.1">
    <property type="nucleotide sequence ID" value="NZ_CP009780.1"/>
</dbReference>
<dbReference type="SMR" id="B2K8A4"/>
<dbReference type="GeneID" id="57976061"/>
<dbReference type="KEGG" id="ypb:YPTS_1179"/>
<dbReference type="PATRIC" id="fig|502801.10.peg.526"/>
<dbReference type="GO" id="GO:0005829">
    <property type="term" value="C:cytosol"/>
    <property type="evidence" value="ECO:0007669"/>
    <property type="project" value="TreeGrafter"/>
</dbReference>
<dbReference type="GO" id="GO:0005524">
    <property type="term" value="F:ATP binding"/>
    <property type="evidence" value="ECO:0007669"/>
    <property type="project" value="UniProtKB-UniRule"/>
</dbReference>
<dbReference type="GO" id="GO:0004819">
    <property type="term" value="F:glutamine-tRNA ligase activity"/>
    <property type="evidence" value="ECO:0007669"/>
    <property type="project" value="UniProtKB-UniRule"/>
</dbReference>
<dbReference type="GO" id="GO:0006425">
    <property type="term" value="P:glutaminyl-tRNA aminoacylation"/>
    <property type="evidence" value="ECO:0007669"/>
    <property type="project" value="InterPro"/>
</dbReference>
<dbReference type="GO" id="GO:0006424">
    <property type="term" value="P:glutamyl-tRNA aminoacylation"/>
    <property type="evidence" value="ECO:0007669"/>
    <property type="project" value="UniProtKB-UniRule"/>
</dbReference>
<dbReference type="CDD" id="cd00807">
    <property type="entry name" value="GlnRS_core"/>
    <property type="match status" value="1"/>
</dbReference>
<dbReference type="FunFam" id="1.10.1160.10:FF:000001">
    <property type="entry name" value="Glutamine--tRNA ligase"/>
    <property type="match status" value="1"/>
</dbReference>
<dbReference type="FunFam" id="2.40.240.10:FF:000001">
    <property type="entry name" value="Glutamine--tRNA ligase"/>
    <property type="match status" value="1"/>
</dbReference>
<dbReference type="FunFam" id="2.40.240.10:FF:000003">
    <property type="entry name" value="Glutamine--tRNA ligase"/>
    <property type="match status" value="1"/>
</dbReference>
<dbReference type="FunFam" id="3.90.800.10:FF:000001">
    <property type="entry name" value="Glutamine--tRNA ligase"/>
    <property type="match status" value="1"/>
</dbReference>
<dbReference type="FunFam" id="3.40.50.620:FF:000037">
    <property type="entry name" value="Glutamine--tRNA ligase cytoplasmic"/>
    <property type="match status" value="1"/>
</dbReference>
<dbReference type="Gene3D" id="1.10.1160.10">
    <property type="entry name" value="Glutamyl-trna Synthetase, Domain 2"/>
    <property type="match status" value="1"/>
</dbReference>
<dbReference type="Gene3D" id="3.90.800.10">
    <property type="entry name" value="Glutamyl-tRNA Synthetase, Domain 3"/>
    <property type="match status" value="1"/>
</dbReference>
<dbReference type="Gene3D" id="3.40.50.620">
    <property type="entry name" value="HUPs"/>
    <property type="match status" value="1"/>
</dbReference>
<dbReference type="Gene3D" id="2.40.240.10">
    <property type="entry name" value="Ribosomal Protein L25, Chain P"/>
    <property type="match status" value="2"/>
</dbReference>
<dbReference type="HAMAP" id="MF_00126">
    <property type="entry name" value="Gln_tRNA_synth"/>
    <property type="match status" value="1"/>
</dbReference>
<dbReference type="InterPro" id="IPR001412">
    <property type="entry name" value="aa-tRNA-synth_I_CS"/>
</dbReference>
<dbReference type="InterPro" id="IPR004514">
    <property type="entry name" value="Gln-tRNA-synth"/>
</dbReference>
<dbReference type="InterPro" id="IPR050132">
    <property type="entry name" value="Gln/Glu-tRNA_Ligase"/>
</dbReference>
<dbReference type="InterPro" id="IPR022861">
    <property type="entry name" value="Gln_tRNA_ligase_bac"/>
</dbReference>
<dbReference type="InterPro" id="IPR000924">
    <property type="entry name" value="Glu/Gln-tRNA-synth"/>
</dbReference>
<dbReference type="InterPro" id="IPR020058">
    <property type="entry name" value="Glu/Gln-tRNA-synth_Ib_cat-dom"/>
</dbReference>
<dbReference type="InterPro" id="IPR020059">
    <property type="entry name" value="Glu/Gln-tRNA-synth_Ib_codon-bd"/>
</dbReference>
<dbReference type="InterPro" id="IPR020061">
    <property type="entry name" value="Glu_tRNA_lig_a-bdl"/>
</dbReference>
<dbReference type="InterPro" id="IPR020056">
    <property type="entry name" value="Rbsml_bL25/Gln-tRNA_synth_N"/>
</dbReference>
<dbReference type="InterPro" id="IPR011035">
    <property type="entry name" value="Ribosomal_bL25/Gln-tRNA_synth"/>
</dbReference>
<dbReference type="InterPro" id="IPR014729">
    <property type="entry name" value="Rossmann-like_a/b/a_fold"/>
</dbReference>
<dbReference type="InterPro" id="IPR049437">
    <property type="entry name" value="tRNA-synt_1c_C2"/>
</dbReference>
<dbReference type="NCBIfam" id="TIGR00440">
    <property type="entry name" value="glnS"/>
    <property type="match status" value="1"/>
</dbReference>
<dbReference type="NCBIfam" id="NF011291">
    <property type="entry name" value="PRK14703.1"/>
    <property type="match status" value="1"/>
</dbReference>
<dbReference type="PANTHER" id="PTHR43097:SF5">
    <property type="entry name" value="GLUTAMATE--TRNA LIGASE"/>
    <property type="match status" value="1"/>
</dbReference>
<dbReference type="PANTHER" id="PTHR43097">
    <property type="entry name" value="GLUTAMINE-TRNA LIGASE"/>
    <property type="match status" value="1"/>
</dbReference>
<dbReference type="Pfam" id="PF00749">
    <property type="entry name" value="tRNA-synt_1c"/>
    <property type="match status" value="1"/>
</dbReference>
<dbReference type="Pfam" id="PF03950">
    <property type="entry name" value="tRNA-synt_1c_C"/>
    <property type="match status" value="1"/>
</dbReference>
<dbReference type="Pfam" id="PF20974">
    <property type="entry name" value="tRNA-synt_1c_C2"/>
    <property type="match status" value="1"/>
</dbReference>
<dbReference type="PRINTS" id="PR00987">
    <property type="entry name" value="TRNASYNTHGLU"/>
</dbReference>
<dbReference type="SUPFAM" id="SSF52374">
    <property type="entry name" value="Nucleotidylyl transferase"/>
    <property type="match status" value="1"/>
</dbReference>
<dbReference type="SUPFAM" id="SSF50715">
    <property type="entry name" value="Ribosomal protein L25-like"/>
    <property type="match status" value="1"/>
</dbReference>
<dbReference type="PROSITE" id="PS00178">
    <property type="entry name" value="AA_TRNA_LIGASE_I"/>
    <property type="match status" value="1"/>
</dbReference>
<accession>B2K8A4</accession>
<proteinExistence type="inferred from homology"/>
<evidence type="ECO:0000255" key="1">
    <source>
        <dbReference type="HAMAP-Rule" id="MF_00126"/>
    </source>
</evidence>
<sequence>MSEAEARPSNFIRQIIDEDLASGKHTSVHTRFPPEPNGYLHIGHAKSICLNFGIAEDYQGQCNLRFDDTNPVKEDVEFVESIKRDVEWLGFTWSGDVRYSSDYFDQLYQYAVELINKGLAYVDELTPEQMREYRGTLTAPGKNSPYRDRSVEENLALFEKMRAGGFAEGTACLRAKIDMASPFIVMRDPVLYRIKFAEHHQSGNKWCIYPMYDFTHCISDALEGITHSLCTLEFQDNRRLYDWVLDNISIDCHPRQYEFSRLNLEYTIMSKRKLNQLVTEKVVEGWDDPRMPTISGLRRRGYTAASIREFCRRIGVTKQDNNVEMMSLESCIRDDLNEHAPRAMAVLDPIKVVIENRAAGEEWLTMPNHPNNPEMGSRQVPFDSEIYIDRADFREEANKQYKRLVLGKEVRLRNAYVIKAERVEKDAEGNVTTLYCSYDAETLNKDPADGRKVKGVIHWVSVAHALPAEIRLYDRLFNVPNPAAAEDFLSTINPESLVIRQGFVEPSLADAVSDKTYQFEREGYFCADSRYSRPGALVFNRTVGLRDTWAAKATQ</sequence>
<protein>
    <recommendedName>
        <fullName evidence="1">Glutamine--tRNA ligase</fullName>
        <ecNumber evidence="1">6.1.1.18</ecNumber>
    </recommendedName>
    <alternativeName>
        <fullName evidence="1">Glutaminyl-tRNA synthetase</fullName>
        <shortName evidence="1">GlnRS</shortName>
    </alternativeName>
</protein>
<gene>
    <name evidence="1" type="primary">glnS</name>
    <name type="ordered locus">YPTS_1179</name>
</gene>